<comment type="function">
    <text evidence="1">Catalyzes the decarboxylation of four acetate groups of uroporphyrinogen-III to yield coproporphyrinogen-III.</text>
</comment>
<comment type="catalytic activity">
    <reaction evidence="1">
        <text>uroporphyrinogen III + 4 H(+) = coproporphyrinogen III + 4 CO2</text>
        <dbReference type="Rhea" id="RHEA:19865"/>
        <dbReference type="ChEBI" id="CHEBI:15378"/>
        <dbReference type="ChEBI" id="CHEBI:16526"/>
        <dbReference type="ChEBI" id="CHEBI:57308"/>
        <dbReference type="ChEBI" id="CHEBI:57309"/>
        <dbReference type="EC" id="4.1.1.37"/>
    </reaction>
</comment>
<comment type="pathway">
    <text evidence="1">Porphyrin-containing compound metabolism; protoporphyrin-IX biosynthesis; coproporphyrinogen-III from 5-aminolevulinate: step 4/4.</text>
</comment>
<comment type="subunit">
    <text evidence="1">Homodimer.</text>
</comment>
<comment type="subcellular location">
    <subcellularLocation>
        <location evidence="1">Cytoplasm</location>
    </subcellularLocation>
</comment>
<comment type="similarity">
    <text evidence="1">Belongs to the uroporphyrinogen decarboxylase family.</text>
</comment>
<reference key="1">
    <citation type="journal article" date="2004" name="PLoS Biol.">
        <title>Genomic insights into methanotrophy: the complete genome sequence of Methylococcus capsulatus (Bath).</title>
        <authorList>
            <person name="Ward N.L."/>
            <person name="Larsen O."/>
            <person name="Sakwa J."/>
            <person name="Bruseth L."/>
            <person name="Khouri H.M."/>
            <person name="Durkin A.S."/>
            <person name="Dimitrov G."/>
            <person name="Jiang L."/>
            <person name="Scanlan D."/>
            <person name="Kang K.H."/>
            <person name="Lewis M.R."/>
            <person name="Nelson K.E."/>
            <person name="Methe B.A."/>
            <person name="Wu M."/>
            <person name="Heidelberg J.F."/>
            <person name="Paulsen I.T."/>
            <person name="Fouts D.E."/>
            <person name="Ravel J."/>
            <person name="Tettelin H."/>
            <person name="Ren Q."/>
            <person name="Read T.D."/>
            <person name="DeBoy R.T."/>
            <person name="Seshadri R."/>
            <person name="Salzberg S.L."/>
            <person name="Jensen H.B."/>
            <person name="Birkeland N.K."/>
            <person name="Nelson W.C."/>
            <person name="Dodson R.J."/>
            <person name="Grindhaug S.H."/>
            <person name="Holt I.E."/>
            <person name="Eidhammer I."/>
            <person name="Jonasen I."/>
            <person name="Vanaken S."/>
            <person name="Utterback T.R."/>
            <person name="Feldblyum T.V."/>
            <person name="Fraser C.M."/>
            <person name="Lillehaug J.R."/>
            <person name="Eisen J.A."/>
        </authorList>
    </citation>
    <scope>NUCLEOTIDE SEQUENCE [LARGE SCALE GENOMIC DNA]</scope>
    <source>
        <strain>ATCC 33009 / NCIMB 11132 / Bath</strain>
    </source>
</reference>
<feature type="chain" id="PRO_0000325663" description="Uroporphyrinogen decarboxylase">
    <location>
        <begin position="1"/>
        <end position="350"/>
    </location>
</feature>
<feature type="binding site" evidence="1">
    <location>
        <begin position="23"/>
        <end position="27"/>
    </location>
    <ligand>
        <name>substrate</name>
    </ligand>
</feature>
<feature type="binding site" evidence="1">
    <location>
        <position position="73"/>
    </location>
    <ligand>
        <name>substrate</name>
    </ligand>
</feature>
<feature type="binding site" evidence="1">
    <location>
        <position position="150"/>
    </location>
    <ligand>
        <name>substrate</name>
    </ligand>
</feature>
<feature type="binding site" evidence="1">
    <location>
        <position position="205"/>
    </location>
    <ligand>
        <name>substrate</name>
    </ligand>
</feature>
<feature type="binding site" evidence="1">
    <location>
        <position position="322"/>
    </location>
    <ligand>
        <name>substrate</name>
    </ligand>
</feature>
<feature type="site" description="Transition state stabilizer" evidence="1">
    <location>
        <position position="73"/>
    </location>
</feature>
<keyword id="KW-0963">Cytoplasm</keyword>
<keyword id="KW-0210">Decarboxylase</keyword>
<keyword id="KW-0456">Lyase</keyword>
<keyword id="KW-0627">Porphyrin biosynthesis</keyword>
<keyword id="KW-1185">Reference proteome</keyword>
<sequence>MTHCFIRALLRQPVERTPVWMMRQAGRYLPEYREVRERAGSFMNLCTSPELACEVTLQPLERYRLDAAILFSDILTVPDAMGLGLEFVEGEGPRFRNPIRGAADIHRLGVPDPEAELAYVPAAVRLIKQRLGDRAPLIGFSGSPWTLATYMVEGGSSREFRKVKCLMYEEPALMHELLEKLADAVALYLNAQIAAGVDAVMVFDTWGGNLDTEHYLAFSLRYAERVRQQLRLTGRGRIPAIFFTKGGGQWLEAMADAGYDALGLDWTTDIGSARQRVGDRVALQGNLDPVALYARPEIIRGEVRKILERYGRGSGHVFNLGHGVTPDIKPEHVGAMIEAVHEFSPAFHRT</sequence>
<dbReference type="EC" id="4.1.1.37" evidence="1"/>
<dbReference type="EMBL" id="AE017282">
    <property type="protein sequence ID" value="AAU90399.1"/>
    <property type="molecule type" value="Genomic_DNA"/>
</dbReference>
<dbReference type="RefSeq" id="WP_010959693.1">
    <property type="nucleotide sequence ID" value="NC_002977.6"/>
</dbReference>
<dbReference type="SMR" id="Q60BY1"/>
<dbReference type="STRING" id="243233.MCA0332"/>
<dbReference type="GeneID" id="88222673"/>
<dbReference type="KEGG" id="mca:MCA0332"/>
<dbReference type="eggNOG" id="COG0407">
    <property type="taxonomic scope" value="Bacteria"/>
</dbReference>
<dbReference type="HOGENOM" id="CLU_040933_0_0_6"/>
<dbReference type="UniPathway" id="UPA00251">
    <property type="reaction ID" value="UER00321"/>
</dbReference>
<dbReference type="Proteomes" id="UP000006821">
    <property type="component" value="Chromosome"/>
</dbReference>
<dbReference type="GO" id="GO:0005829">
    <property type="term" value="C:cytosol"/>
    <property type="evidence" value="ECO:0007669"/>
    <property type="project" value="TreeGrafter"/>
</dbReference>
<dbReference type="GO" id="GO:0004853">
    <property type="term" value="F:uroporphyrinogen decarboxylase activity"/>
    <property type="evidence" value="ECO:0007669"/>
    <property type="project" value="UniProtKB-UniRule"/>
</dbReference>
<dbReference type="GO" id="GO:0019353">
    <property type="term" value="P:protoporphyrinogen IX biosynthetic process from glutamate"/>
    <property type="evidence" value="ECO:0007669"/>
    <property type="project" value="TreeGrafter"/>
</dbReference>
<dbReference type="CDD" id="cd00717">
    <property type="entry name" value="URO-D"/>
    <property type="match status" value="1"/>
</dbReference>
<dbReference type="FunFam" id="3.20.20.210:FF:000001">
    <property type="entry name" value="Uroporphyrinogen decarboxylase"/>
    <property type="match status" value="1"/>
</dbReference>
<dbReference type="Gene3D" id="3.20.20.210">
    <property type="match status" value="1"/>
</dbReference>
<dbReference type="HAMAP" id="MF_00218">
    <property type="entry name" value="URO_D"/>
    <property type="match status" value="1"/>
</dbReference>
<dbReference type="InterPro" id="IPR038071">
    <property type="entry name" value="UROD/MetE-like_sf"/>
</dbReference>
<dbReference type="InterPro" id="IPR006361">
    <property type="entry name" value="Uroporphyrinogen_deCO2ase_HemE"/>
</dbReference>
<dbReference type="InterPro" id="IPR000257">
    <property type="entry name" value="Uroporphyrinogen_deCOase"/>
</dbReference>
<dbReference type="NCBIfam" id="TIGR01464">
    <property type="entry name" value="hemE"/>
    <property type="match status" value="1"/>
</dbReference>
<dbReference type="PANTHER" id="PTHR21091">
    <property type="entry name" value="METHYLTETRAHYDROFOLATE:HOMOCYSTEINE METHYLTRANSFERASE RELATED"/>
    <property type="match status" value="1"/>
</dbReference>
<dbReference type="PANTHER" id="PTHR21091:SF169">
    <property type="entry name" value="UROPORPHYRINOGEN DECARBOXYLASE"/>
    <property type="match status" value="1"/>
</dbReference>
<dbReference type="Pfam" id="PF01208">
    <property type="entry name" value="URO-D"/>
    <property type="match status" value="1"/>
</dbReference>
<dbReference type="SUPFAM" id="SSF51726">
    <property type="entry name" value="UROD/MetE-like"/>
    <property type="match status" value="1"/>
</dbReference>
<dbReference type="PROSITE" id="PS00906">
    <property type="entry name" value="UROD_1"/>
    <property type="match status" value="1"/>
</dbReference>
<dbReference type="PROSITE" id="PS00907">
    <property type="entry name" value="UROD_2"/>
    <property type="match status" value="1"/>
</dbReference>
<protein>
    <recommendedName>
        <fullName evidence="1">Uroporphyrinogen decarboxylase</fullName>
        <shortName evidence="1">UPD</shortName>
        <shortName evidence="1">URO-D</shortName>
        <ecNumber evidence="1">4.1.1.37</ecNumber>
    </recommendedName>
</protein>
<name>DCUP_METCA</name>
<gene>
    <name evidence="1" type="primary">hemE</name>
    <name type="ordered locus">MCA0332</name>
</gene>
<accession>Q60BY1</accession>
<evidence type="ECO:0000255" key="1">
    <source>
        <dbReference type="HAMAP-Rule" id="MF_00218"/>
    </source>
</evidence>
<proteinExistence type="inferred from homology"/>
<organism>
    <name type="scientific">Methylococcus capsulatus (strain ATCC 33009 / NCIMB 11132 / Bath)</name>
    <dbReference type="NCBI Taxonomy" id="243233"/>
    <lineage>
        <taxon>Bacteria</taxon>
        <taxon>Pseudomonadati</taxon>
        <taxon>Pseudomonadota</taxon>
        <taxon>Gammaproteobacteria</taxon>
        <taxon>Methylococcales</taxon>
        <taxon>Methylococcaceae</taxon>
        <taxon>Methylococcus</taxon>
    </lineage>
</organism>